<keyword id="KW-1185">Reference proteome</keyword>
<protein>
    <recommendedName>
        <fullName>Uncharacterized protein HI_0552</fullName>
    </recommendedName>
</protein>
<sequence>MLSLTAESCELFNIPFYQFAQMKKFCPEDIPAIKADYKLHWDNWKAIIQSVSAQLGTPFAKPHIESWTNGWQVRAHFFAYFKYEFNQNSAAIFSVLLNRRRLRVCLDWHCYRADRSQINVQQYNQWLDQFDFKQFADFEIWREDESEYDDFRQVKVISEKNLILRSDEDFWCIGKSIEKAELNQIDPVLFITHTIQQLQPLYDRCHQ</sequence>
<gene>
    <name type="ordered locus">HI_0552</name>
</gene>
<name>Y552_HAEIN</name>
<dbReference type="EMBL" id="L42023">
    <property type="protein sequence ID" value="AAC22216.1"/>
    <property type="molecule type" value="Genomic_DNA"/>
</dbReference>
<dbReference type="PIR" id="D64009">
    <property type="entry name" value="D64009"/>
</dbReference>
<dbReference type="RefSeq" id="NP_438710.1">
    <property type="nucleotide sequence ID" value="NC_000907.1"/>
</dbReference>
<dbReference type="STRING" id="71421.HI_0552"/>
<dbReference type="EnsemblBacteria" id="AAC22216">
    <property type="protein sequence ID" value="AAC22216"/>
    <property type="gene ID" value="HI_0552"/>
</dbReference>
<dbReference type="KEGG" id="hin:HI_0552"/>
<dbReference type="PATRIC" id="fig|71421.8.peg.572"/>
<dbReference type="eggNOG" id="ENOG50331XM">
    <property type="taxonomic scope" value="Bacteria"/>
</dbReference>
<dbReference type="HOGENOM" id="CLU_1336167_0_0_6"/>
<dbReference type="OrthoDB" id="2360289at2"/>
<dbReference type="BioCyc" id="HINF71421:G1GJ1-565-MONOMER"/>
<dbReference type="Proteomes" id="UP000000579">
    <property type="component" value="Chromosome"/>
</dbReference>
<dbReference type="InterPro" id="IPR019722">
    <property type="entry name" value="HI_0552_fam"/>
</dbReference>
<dbReference type="Pfam" id="PF10786">
    <property type="entry name" value="HI_0552"/>
    <property type="match status" value="1"/>
</dbReference>
<reference key="1">
    <citation type="journal article" date="1995" name="Science">
        <title>Whole-genome random sequencing and assembly of Haemophilus influenzae Rd.</title>
        <authorList>
            <person name="Fleischmann R.D."/>
            <person name="Adams M.D."/>
            <person name="White O."/>
            <person name="Clayton R.A."/>
            <person name="Kirkness E.F."/>
            <person name="Kerlavage A.R."/>
            <person name="Bult C.J."/>
            <person name="Tomb J.-F."/>
            <person name="Dougherty B.A."/>
            <person name="Merrick J.M."/>
            <person name="McKenney K."/>
            <person name="Sutton G.G."/>
            <person name="FitzHugh W."/>
            <person name="Fields C.A."/>
            <person name="Gocayne J.D."/>
            <person name="Scott J.D."/>
            <person name="Shirley R."/>
            <person name="Liu L.-I."/>
            <person name="Glodek A."/>
            <person name="Kelley J.M."/>
            <person name="Weidman J.F."/>
            <person name="Phillips C.A."/>
            <person name="Spriggs T."/>
            <person name="Hedblom E."/>
            <person name="Cotton M.D."/>
            <person name="Utterback T.R."/>
            <person name="Hanna M.C."/>
            <person name="Nguyen D.T."/>
            <person name="Saudek D.M."/>
            <person name="Brandon R.C."/>
            <person name="Fine L.D."/>
            <person name="Fritchman J.L."/>
            <person name="Fuhrmann J.L."/>
            <person name="Geoghagen N.S.M."/>
            <person name="Gnehm C.L."/>
            <person name="McDonald L.A."/>
            <person name="Small K.V."/>
            <person name="Fraser C.M."/>
            <person name="Smith H.O."/>
            <person name="Venter J.C."/>
        </authorList>
    </citation>
    <scope>NUCLEOTIDE SEQUENCE [LARGE SCALE GENOMIC DNA]</scope>
    <source>
        <strain>ATCC 51907 / DSM 11121 / KW20 / Rd</strain>
    </source>
</reference>
<organism>
    <name type="scientific">Haemophilus influenzae (strain ATCC 51907 / DSM 11121 / KW20 / Rd)</name>
    <dbReference type="NCBI Taxonomy" id="71421"/>
    <lineage>
        <taxon>Bacteria</taxon>
        <taxon>Pseudomonadati</taxon>
        <taxon>Pseudomonadota</taxon>
        <taxon>Gammaproteobacteria</taxon>
        <taxon>Pasteurellales</taxon>
        <taxon>Pasteurellaceae</taxon>
        <taxon>Haemophilus</taxon>
    </lineage>
</organism>
<accession>P44013</accession>
<proteinExistence type="predicted"/>
<feature type="chain" id="PRO_0000077930" description="Uncharacterized protein HI_0552">
    <location>
        <begin position="1"/>
        <end position="207"/>
    </location>
</feature>